<dbReference type="EC" id="2.7.7.6" evidence="1"/>
<dbReference type="EMBL" id="BX950851">
    <property type="protein sequence ID" value="CAG72961.1"/>
    <property type="molecule type" value="Genomic_DNA"/>
</dbReference>
<dbReference type="RefSeq" id="WP_011091685.1">
    <property type="nucleotide sequence ID" value="NC_004547.2"/>
</dbReference>
<dbReference type="SMR" id="Q6DB61"/>
<dbReference type="STRING" id="218491.ECA0039"/>
<dbReference type="GeneID" id="57206895"/>
<dbReference type="KEGG" id="eca:ECA0039"/>
<dbReference type="eggNOG" id="COG1758">
    <property type="taxonomic scope" value="Bacteria"/>
</dbReference>
<dbReference type="HOGENOM" id="CLU_125406_5_3_6"/>
<dbReference type="OrthoDB" id="9796300at2"/>
<dbReference type="Proteomes" id="UP000007966">
    <property type="component" value="Chromosome"/>
</dbReference>
<dbReference type="GO" id="GO:0000428">
    <property type="term" value="C:DNA-directed RNA polymerase complex"/>
    <property type="evidence" value="ECO:0007669"/>
    <property type="project" value="UniProtKB-KW"/>
</dbReference>
<dbReference type="GO" id="GO:0003677">
    <property type="term" value="F:DNA binding"/>
    <property type="evidence" value="ECO:0007669"/>
    <property type="project" value="UniProtKB-UniRule"/>
</dbReference>
<dbReference type="GO" id="GO:0003899">
    <property type="term" value="F:DNA-directed RNA polymerase activity"/>
    <property type="evidence" value="ECO:0007669"/>
    <property type="project" value="UniProtKB-UniRule"/>
</dbReference>
<dbReference type="GO" id="GO:0006351">
    <property type="term" value="P:DNA-templated transcription"/>
    <property type="evidence" value="ECO:0007669"/>
    <property type="project" value="UniProtKB-UniRule"/>
</dbReference>
<dbReference type="FunFam" id="3.90.940.10:FF:000001">
    <property type="entry name" value="DNA-directed RNA polymerase subunit omega"/>
    <property type="match status" value="1"/>
</dbReference>
<dbReference type="Gene3D" id="3.90.940.10">
    <property type="match status" value="1"/>
</dbReference>
<dbReference type="HAMAP" id="MF_00366">
    <property type="entry name" value="RNApol_bact_RpoZ"/>
    <property type="match status" value="1"/>
</dbReference>
<dbReference type="InterPro" id="IPR003716">
    <property type="entry name" value="DNA-dir_RNA_pol_omega"/>
</dbReference>
<dbReference type="InterPro" id="IPR006110">
    <property type="entry name" value="Pol_omega/Rpo6/RPB6"/>
</dbReference>
<dbReference type="InterPro" id="IPR036161">
    <property type="entry name" value="RPB6/omega-like_sf"/>
</dbReference>
<dbReference type="NCBIfam" id="TIGR00690">
    <property type="entry name" value="rpoZ"/>
    <property type="match status" value="1"/>
</dbReference>
<dbReference type="PANTHER" id="PTHR34476">
    <property type="entry name" value="DNA-DIRECTED RNA POLYMERASE SUBUNIT OMEGA"/>
    <property type="match status" value="1"/>
</dbReference>
<dbReference type="PANTHER" id="PTHR34476:SF1">
    <property type="entry name" value="DNA-DIRECTED RNA POLYMERASE SUBUNIT OMEGA"/>
    <property type="match status" value="1"/>
</dbReference>
<dbReference type="Pfam" id="PF01192">
    <property type="entry name" value="RNA_pol_Rpb6"/>
    <property type="match status" value="1"/>
</dbReference>
<dbReference type="SMART" id="SM01409">
    <property type="entry name" value="RNA_pol_Rpb6"/>
    <property type="match status" value="1"/>
</dbReference>
<dbReference type="SUPFAM" id="SSF63562">
    <property type="entry name" value="RPB6/omega subunit-like"/>
    <property type="match status" value="1"/>
</dbReference>
<protein>
    <recommendedName>
        <fullName evidence="1">DNA-directed RNA polymerase subunit omega</fullName>
        <shortName evidence="1">RNAP omega subunit</shortName>
        <ecNumber evidence="1">2.7.7.6</ecNumber>
    </recommendedName>
    <alternativeName>
        <fullName evidence="1">RNA polymerase omega subunit</fullName>
    </alternativeName>
    <alternativeName>
        <fullName evidence="1">Transcriptase subunit omega</fullName>
    </alternativeName>
</protein>
<proteinExistence type="inferred from homology"/>
<feature type="chain" id="PRO_0000237458" description="DNA-directed RNA polymerase subunit omega">
    <location>
        <begin position="1"/>
        <end position="91"/>
    </location>
</feature>
<gene>
    <name evidence="1" type="primary">rpoZ</name>
    <name type="ordered locus">ECA0039</name>
</gene>
<keyword id="KW-0240">DNA-directed RNA polymerase</keyword>
<keyword id="KW-0548">Nucleotidyltransferase</keyword>
<keyword id="KW-1185">Reference proteome</keyword>
<keyword id="KW-0804">Transcription</keyword>
<keyword id="KW-0808">Transferase</keyword>
<organism>
    <name type="scientific">Pectobacterium atrosepticum (strain SCRI 1043 / ATCC BAA-672)</name>
    <name type="common">Erwinia carotovora subsp. atroseptica</name>
    <dbReference type="NCBI Taxonomy" id="218491"/>
    <lineage>
        <taxon>Bacteria</taxon>
        <taxon>Pseudomonadati</taxon>
        <taxon>Pseudomonadota</taxon>
        <taxon>Gammaproteobacteria</taxon>
        <taxon>Enterobacterales</taxon>
        <taxon>Pectobacteriaceae</taxon>
        <taxon>Pectobacterium</taxon>
    </lineage>
</organism>
<comment type="function">
    <text evidence="1">Promotes RNA polymerase assembly. Latches the N- and C-terminal regions of the beta' subunit thereby facilitating its interaction with the beta and alpha subunits.</text>
</comment>
<comment type="catalytic activity">
    <reaction evidence="1">
        <text>RNA(n) + a ribonucleoside 5'-triphosphate = RNA(n+1) + diphosphate</text>
        <dbReference type="Rhea" id="RHEA:21248"/>
        <dbReference type="Rhea" id="RHEA-COMP:14527"/>
        <dbReference type="Rhea" id="RHEA-COMP:17342"/>
        <dbReference type="ChEBI" id="CHEBI:33019"/>
        <dbReference type="ChEBI" id="CHEBI:61557"/>
        <dbReference type="ChEBI" id="CHEBI:140395"/>
        <dbReference type="EC" id="2.7.7.6"/>
    </reaction>
</comment>
<comment type="subunit">
    <text evidence="1">The RNAP catalytic core consists of 2 alpha, 1 beta, 1 beta' and 1 omega subunit. When a sigma factor is associated with the core the holoenzyme is formed, which can initiate transcription.</text>
</comment>
<comment type="similarity">
    <text evidence="1">Belongs to the RNA polymerase subunit omega family.</text>
</comment>
<sequence>MARVTVQDAVEKIGNRFDLVLVAARRARQLQTGGKDPLVPEENDKYTVIALREIEDGLINNQILDVRDRQEQQEQEAAEIQAVTAIAEGRR</sequence>
<accession>Q6DB61</accession>
<evidence type="ECO:0000255" key="1">
    <source>
        <dbReference type="HAMAP-Rule" id="MF_00366"/>
    </source>
</evidence>
<name>RPOZ_PECAS</name>
<reference key="1">
    <citation type="journal article" date="2004" name="Proc. Natl. Acad. Sci. U.S.A.">
        <title>Genome sequence of the enterobacterial phytopathogen Erwinia carotovora subsp. atroseptica and characterization of virulence factors.</title>
        <authorList>
            <person name="Bell K.S."/>
            <person name="Sebaihia M."/>
            <person name="Pritchard L."/>
            <person name="Holden M.T.G."/>
            <person name="Hyman L.J."/>
            <person name="Holeva M.C."/>
            <person name="Thomson N.R."/>
            <person name="Bentley S.D."/>
            <person name="Churcher L.J.C."/>
            <person name="Mungall K."/>
            <person name="Atkin R."/>
            <person name="Bason N."/>
            <person name="Brooks K."/>
            <person name="Chillingworth T."/>
            <person name="Clark K."/>
            <person name="Doggett J."/>
            <person name="Fraser A."/>
            <person name="Hance Z."/>
            <person name="Hauser H."/>
            <person name="Jagels K."/>
            <person name="Moule S."/>
            <person name="Norbertczak H."/>
            <person name="Ormond D."/>
            <person name="Price C."/>
            <person name="Quail M.A."/>
            <person name="Sanders M."/>
            <person name="Walker D."/>
            <person name="Whitehead S."/>
            <person name="Salmond G.P.C."/>
            <person name="Birch P.R.J."/>
            <person name="Parkhill J."/>
            <person name="Toth I.K."/>
        </authorList>
    </citation>
    <scope>NUCLEOTIDE SEQUENCE [LARGE SCALE GENOMIC DNA]</scope>
    <source>
        <strain>SCRI 1043 / ATCC BAA-672</strain>
    </source>
</reference>